<sequence>MAKEKIVLAYSGGLDTSVAIQWLVESGYEVIACCLDVGEGKNLDFIKEKAITVGASESYTIDAKEEFAEDFALIALQAHAYYEGKYPLISALSRPLIAKKLVEVARQEGASAIAHGCTGKGNDQVRFEVAIHALAPDLKVVSPVRDWKWSREEEINYAKEHNIPVPIDLDNPFSIDQNLWGRSNECGVLENPWTTPPEAAYDLTVSLEDAPDTPDIVEITFDAGIPISLNGENMSLANLILTLNEIAGKHGVGRIDHIENRLVGIKSREVYECPAAVTLITAHKELEDLTFVREVAHFKPIIEQKISETIYNGLWFSPLTEALVAFLKSTQKFVNGTIRVKLFKGHAIVEGRKSPNSLYDENLATYTSSDTFDQDAAVGFIKLWGLPTKVSAEVNSKVTITTEV</sequence>
<gene>
    <name evidence="1" type="primary">argG</name>
    <name type="ordered locus">LMOf2365_2122</name>
</gene>
<evidence type="ECO:0000255" key="1">
    <source>
        <dbReference type="HAMAP-Rule" id="MF_00005"/>
    </source>
</evidence>
<name>ASSY_LISMF</name>
<protein>
    <recommendedName>
        <fullName evidence="1">Argininosuccinate synthase</fullName>
        <ecNumber evidence="1">6.3.4.5</ecNumber>
    </recommendedName>
    <alternativeName>
        <fullName evidence="1">Citrulline--aspartate ligase</fullName>
    </alternativeName>
</protein>
<reference key="1">
    <citation type="journal article" date="2004" name="Nucleic Acids Res.">
        <title>Whole genome comparisons of serotype 4b and 1/2a strains of the food-borne pathogen Listeria monocytogenes reveal new insights into the core genome components of this species.</title>
        <authorList>
            <person name="Nelson K.E."/>
            <person name="Fouts D.E."/>
            <person name="Mongodin E.F."/>
            <person name="Ravel J."/>
            <person name="DeBoy R.T."/>
            <person name="Kolonay J.F."/>
            <person name="Rasko D.A."/>
            <person name="Angiuoli S.V."/>
            <person name="Gill S.R."/>
            <person name="Paulsen I.T."/>
            <person name="Peterson J.D."/>
            <person name="White O."/>
            <person name="Nelson W.C."/>
            <person name="Nierman W.C."/>
            <person name="Beanan M.J."/>
            <person name="Brinkac L.M."/>
            <person name="Daugherty S.C."/>
            <person name="Dodson R.J."/>
            <person name="Durkin A.S."/>
            <person name="Madupu R."/>
            <person name="Haft D.H."/>
            <person name="Selengut J."/>
            <person name="Van Aken S.E."/>
            <person name="Khouri H.M."/>
            <person name="Fedorova N."/>
            <person name="Forberger H.A."/>
            <person name="Tran B."/>
            <person name="Kathariou S."/>
            <person name="Wonderling L.D."/>
            <person name="Uhlich G.A."/>
            <person name="Bayles D.O."/>
            <person name="Luchansky J.B."/>
            <person name="Fraser C.M."/>
        </authorList>
    </citation>
    <scope>NUCLEOTIDE SEQUENCE [LARGE SCALE GENOMIC DNA]</scope>
    <source>
        <strain>F2365</strain>
    </source>
</reference>
<keyword id="KW-0028">Amino-acid biosynthesis</keyword>
<keyword id="KW-0055">Arginine biosynthesis</keyword>
<keyword id="KW-0067">ATP-binding</keyword>
<keyword id="KW-0963">Cytoplasm</keyword>
<keyword id="KW-0436">Ligase</keyword>
<keyword id="KW-0547">Nucleotide-binding</keyword>
<proteinExistence type="inferred from homology"/>
<comment type="catalytic activity">
    <reaction evidence="1">
        <text>L-citrulline + L-aspartate + ATP = 2-(N(omega)-L-arginino)succinate + AMP + diphosphate + H(+)</text>
        <dbReference type="Rhea" id="RHEA:10932"/>
        <dbReference type="ChEBI" id="CHEBI:15378"/>
        <dbReference type="ChEBI" id="CHEBI:29991"/>
        <dbReference type="ChEBI" id="CHEBI:30616"/>
        <dbReference type="ChEBI" id="CHEBI:33019"/>
        <dbReference type="ChEBI" id="CHEBI:57472"/>
        <dbReference type="ChEBI" id="CHEBI:57743"/>
        <dbReference type="ChEBI" id="CHEBI:456215"/>
        <dbReference type="EC" id="6.3.4.5"/>
    </reaction>
</comment>
<comment type="pathway">
    <text evidence="1">Amino-acid biosynthesis; L-arginine biosynthesis; L-arginine from L-ornithine and carbamoyl phosphate: step 2/3.</text>
</comment>
<comment type="subunit">
    <text evidence="1">Homotetramer.</text>
</comment>
<comment type="subcellular location">
    <subcellularLocation>
        <location evidence="1">Cytoplasm</location>
    </subcellularLocation>
</comment>
<comment type="similarity">
    <text evidence="1">Belongs to the argininosuccinate synthase family. Type 1 subfamily.</text>
</comment>
<dbReference type="EC" id="6.3.4.5" evidence="1"/>
<dbReference type="EMBL" id="AE017262">
    <property type="protein sequence ID" value="AAT04891.1"/>
    <property type="molecule type" value="Genomic_DNA"/>
</dbReference>
<dbReference type="RefSeq" id="WP_003724518.1">
    <property type="nucleotide sequence ID" value="NC_002973.6"/>
</dbReference>
<dbReference type="SMR" id="Q71XS4"/>
<dbReference type="KEGG" id="lmf:LMOf2365_2122"/>
<dbReference type="HOGENOM" id="CLU_032784_4_2_9"/>
<dbReference type="UniPathway" id="UPA00068">
    <property type="reaction ID" value="UER00113"/>
</dbReference>
<dbReference type="GO" id="GO:0005737">
    <property type="term" value="C:cytoplasm"/>
    <property type="evidence" value="ECO:0007669"/>
    <property type="project" value="UniProtKB-SubCell"/>
</dbReference>
<dbReference type="GO" id="GO:0004055">
    <property type="term" value="F:argininosuccinate synthase activity"/>
    <property type="evidence" value="ECO:0007669"/>
    <property type="project" value="UniProtKB-UniRule"/>
</dbReference>
<dbReference type="GO" id="GO:0005524">
    <property type="term" value="F:ATP binding"/>
    <property type="evidence" value="ECO:0007669"/>
    <property type="project" value="UniProtKB-UniRule"/>
</dbReference>
<dbReference type="GO" id="GO:0000053">
    <property type="term" value="P:argininosuccinate metabolic process"/>
    <property type="evidence" value="ECO:0007669"/>
    <property type="project" value="TreeGrafter"/>
</dbReference>
<dbReference type="GO" id="GO:0006526">
    <property type="term" value="P:L-arginine biosynthetic process"/>
    <property type="evidence" value="ECO:0007669"/>
    <property type="project" value="UniProtKB-UniRule"/>
</dbReference>
<dbReference type="GO" id="GO:0000050">
    <property type="term" value="P:urea cycle"/>
    <property type="evidence" value="ECO:0007669"/>
    <property type="project" value="TreeGrafter"/>
</dbReference>
<dbReference type="CDD" id="cd01999">
    <property type="entry name" value="ASS"/>
    <property type="match status" value="1"/>
</dbReference>
<dbReference type="FunFam" id="1.20.5.470:FF:000002">
    <property type="entry name" value="Argininosuccinate synthase"/>
    <property type="match status" value="1"/>
</dbReference>
<dbReference type="FunFam" id="3.40.50.620:FF:000038">
    <property type="entry name" value="Argininosuccinate synthase"/>
    <property type="match status" value="1"/>
</dbReference>
<dbReference type="FunFam" id="3.90.1260.10:FF:000007">
    <property type="entry name" value="Argininosuccinate synthase"/>
    <property type="match status" value="1"/>
</dbReference>
<dbReference type="Gene3D" id="3.90.1260.10">
    <property type="entry name" value="Argininosuccinate synthetase, chain A, domain 2"/>
    <property type="match status" value="1"/>
</dbReference>
<dbReference type="Gene3D" id="3.40.50.620">
    <property type="entry name" value="HUPs"/>
    <property type="match status" value="1"/>
</dbReference>
<dbReference type="Gene3D" id="1.20.5.470">
    <property type="entry name" value="Single helix bin"/>
    <property type="match status" value="1"/>
</dbReference>
<dbReference type="HAMAP" id="MF_00005">
    <property type="entry name" value="Arg_succ_synth_type1"/>
    <property type="match status" value="1"/>
</dbReference>
<dbReference type="InterPro" id="IPR048268">
    <property type="entry name" value="Arginosuc_syn_C"/>
</dbReference>
<dbReference type="InterPro" id="IPR048267">
    <property type="entry name" value="Arginosuc_syn_N"/>
</dbReference>
<dbReference type="InterPro" id="IPR001518">
    <property type="entry name" value="Arginosuc_synth"/>
</dbReference>
<dbReference type="InterPro" id="IPR018223">
    <property type="entry name" value="Arginosuc_synth_CS"/>
</dbReference>
<dbReference type="InterPro" id="IPR023434">
    <property type="entry name" value="Arginosuc_synth_type_1_subfam"/>
</dbReference>
<dbReference type="InterPro" id="IPR024074">
    <property type="entry name" value="AS_cat/multimer_dom_body"/>
</dbReference>
<dbReference type="InterPro" id="IPR014729">
    <property type="entry name" value="Rossmann-like_a/b/a_fold"/>
</dbReference>
<dbReference type="NCBIfam" id="TIGR00032">
    <property type="entry name" value="argG"/>
    <property type="match status" value="1"/>
</dbReference>
<dbReference type="NCBIfam" id="NF001770">
    <property type="entry name" value="PRK00509.1"/>
    <property type="match status" value="1"/>
</dbReference>
<dbReference type="PANTHER" id="PTHR11587">
    <property type="entry name" value="ARGININOSUCCINATE SYNTHASE"/>
    <property type="match status" value="1"/>
</dbReference>
<dbReference type="PANTHER" id="PTHR11587:SF2">
    <property type="entry name" value="ARGININOSUCCINATE SYNTHASE"/>
    <property type="match status" value="1"/>
</dbReference>
<dbReference type="Pfam" id="PF20979">
    <property type="entry name" value="Arginosuc_syn_C"/>
    <property type="match status" value="1"/>
</dbReference>
<dbReference type="Pfam" id="PF00764">
    <property type="entry name" value="Arginosuc_synth"/>
    <property type="match status" value="1"/>
</dbReference>
<dbReference type="SUPFAM" id="SSF52402">
    <property type="entry name" value="Adenine nucleotide alpha hydrolases-like"/>
    <property type="match status" value="1"/>
</dbReference>
<dbReference type="SUPFAM" id="SSF69864">
    <property type="entry name" value="Argininosuccinate synthetase, C-terminal domain"/>
    <property type="match status" value="1"/>
</dbReference>
<dbReference type="PROSITE" id="PS00564">
    <property type="entry name" value="ARGININOSUCCIN_SYN_1"/>
    <property type="match status" value="1"/>
</dbReference>
<dbReference type="PROSITE" id="PS00565">
    <property type="entry name" value="ARGININOSUCCIN_SYN_2"/>
    <property type="match status" value="1"/>
</dbReference>
<feature type="chain" id="PRO_0000148609" description="Argininosuccinate synthase">
    <location>
        <begin position="1"/>
        <end position="404"/>
    </location>
</feature>
<feature type="binding site" evidence="1">
    <location>
        <begin position="9"/>
        <end position="17"/>
    </location>
    <ligand>
        <name>ATP</name>
        <dbReference type="ChEBI" id="CHEBI:30616"/>
    </ligand>
</feature>
<feature type="binding site" evidence="1">
    <location>
        <position position="86"/>
    </location>
    <ligand>
        <name>L-citrulline</name>
        <dbReference type="ChEBI" id="CHEBI:57743"/>
    </ligand>
</feature>
<feature type="binding site" evidence="1">
    <location>
        <position position="116"/>
    </location>
    <ligand>
        <name>ATP</name>
        <dbReference type="ChEBI" id="CHEBI:30616"/>
    </ligand>
</feature>
<feature type="binding site" evidence="1">
    <location>
        <position position="118"/>
    </location>
    <ligand>
        <name>L-aspartate</name>
        <dbReference type="ChEBI" id="CHEBI:29991"/>
    </ligand>
</feature>
<feature type="binding site" evidence="1">
    <location>
        <position position="122"/>
    </location>
    <ligand>
        <name>L-aspartate</name>
        <dbReference type="ChEBI" id="CHEBI:29991"/>
    </ligand>
</feature>
<feature type="binding site" evidence="1">
    <location>
        <position position="122"/>
    </location>
    <ligand>
        <name>L-citrulline</name>
        <dbReference type="ChEBI" id="CHEBI:57743"/>
    </ligand>
</feature>
<feature type="binding site" evidence="1">
    <location>
        <position position="123"/>
    </location>
    <ligand>
        <name>L-aspartate</name>
        <dbReference type="ChEBI" id="CHEBI:29991"/>
    </ligand>
</feature>
<feature type="binding site" evidence="1">
    <location>
        <position position="126"/>
    </location>
    <ligand>
        <name>L-citrulline</name>
        <dbReference type="ChEBI" id="CHEBI:57743"/>
    </ligand>
</feature>
<feature type="binding site" evidence="1">
    <location>
        <position position="174"/>
    </location>
    <ligand>
        <name>L-citrulline</name>
        <dbReference type="ChEBI" id="CHEBI:57743"/>
    </ligand>
</feature>
<feature type="binding site" evidence="1">
    <location>
        <position position="183"/>
    </location>
    <ligand>
        <name>L-citrulline</name>
        <dbReference type="ChEBI" id="CHEBI:57743"/>
    </ligand>
</feature>
<feature type="binding site" evidence="1">
    <location>
        <position position="259"/>
    </location>
    <ligand>
        <name>L-citrulline</name>
        <dbReference type="ChEBI" id="CHEBI:57743"/>
    </ligand>
</feature>
<feature type="binding site" evidence="1">
    <location>
        <position position="271"/>
    </location>
    <ligand>
        <name>L-citrulline</name>
        <dbReference type="ChEBI" id="CHEBI:57743"/>
    </ligand>
</feature>
<accession>Q71XS4</accession>
<organism>
    <name type="scientific">Listeria monocytogenes serotype 4b (strain F2365)</name>
    <dbReference type="NCBI Taxonomy" id="265669"/>
    <lineage>
        <taxon>Bacteria</taxon>
        <taxon>Bacillati</taxon>
        <taxon>Bacillota</taxon>
        <taxon>Bacilli</taxon>
        <taxon>Bacillales</taxon>
        <taxon>Listeriaceae</taxon>
        <taxon>Listeria</taxon>
    </lineage>
</organism>